<organismHost>
    <name type="scientific">Pantherophis guttatus</name>
    <name type="common">Corn snake</name>
    <name type="synonym">Elaphe guttata</name>
    <dbReference type="NCBI Taxonomy" id="94885"/>
</organismHost>
<keyword id="KW-0068">Autocatalytic cleavage</keyword>
<keyword id="KW-1015">Disulfide bond</keyword>
<keyword id="KW-0238">DNA-binding</keyword>
<keyword id="KW-1048">Host nucleus</keyword>
<keyword id="KW-0378">Hydrolase</keyword>
<keyword id="KW-0426">Late protein</keyword>
<keyword id="KW-0645">Protease</keyword>
<keyword id="KW-1185">Reference proteome</keyword>
<keyword id="KW-0788">Thiol protease</keyword>
<keyword id="KW-0946">Virion</keyword>
<name>PRO_ADES1</name>
<reference key="1">
    <citation type="journal article" date="2002" name="J. Gen. Virol.">
        <title>Genetic analysis of an adenovirus isolated from corn snake (Elaphe guttata) implies common origin with the members of the proposed new genus Atadenovirus.</title>
        <authorList>
            <person name="Farkas S.L."/>
            <person name="Benko M."/>
            <person name="Elo P.T."/>
            <person name="Ursu K."/>
            <person name="Dan A."/>
            <person name="Ahne W."/>
            <person name="Harrach B."/>
        </authorList>
    </citation>
    <scope>NUCLEOTIDE SEQUENCE [GENOMIC DNA]</scope>
</reference>
<gene>
    <name evidence="1" type="primary">L3</name>
</gene>
<protein>
    <recommendedName>
        <fullName evidence="1">Protease</fullName>
        <ecNumber evidence="1">3.4.22.39</ecNumber>
    </recommendedName>
    <alternativeName>
        <fullName evidence="1">Adenain</fullName>
    </alternativeName>
    <alternativeName>
        <fullName evidence="1">Adenovirus protease</fullName>
        <shortName evidence="1">AVP</shortName>
    </alternativeName>
    <alternativeName>
        <fullName evidence="1">Adenovirus proteinase</fullName>
    </alternativeName>
    <alternativeName>
        <fullName evidence="1">Endoprotease</fullName>
    </alternativeName>
</protein>
<proteinExistence type="inferred from homology"/>
<organism>
    <name type="scientific">Snake adenovirus serotype 1</name>
    <name type="common">SnAdV-1</name>
    <dbReference type="NCBI Taxonomy" id="189830"/>
    <lineage>
        <taxon>Viruses</taxon>
        <taxon>Varidnaviria</taxon>
        <taxon>Bamfordvirae</taxon>
        <taxon>Preplasmiviricota</taxon>
        <taxon>Tectiliviricetes</taxon>
        <taxon>Rowavirales</taxon>
        <taxon>Adenoviridae</taxon>
        <taxon>Atadenovirus</taxon>
        <taxon>Snake atadenovirus A</taxon>
    </lineage>
</organism>
<sequence length="201" mass="22713">MSGSSEQELKMMVRSLNLESGFLGTFDCRFPGFISKDRRQTAIVNTGPREQGGVHWIALAWDPTSRKMFLFDPLGWTNAELKKYYGFSYQNMVQRSALSSADRCVTLERNTQAVQCTCAGSCGLFCILFLYCAHLSPSNPFGTSLFQSLDGQKSGMVPRSPEALHKNQQILYNFLSSKCAYFRKNARNIVMNTRLHLIKTH</sequence>
<feature type="chain" id="PRO_0000218048" description="Protease">
    <location>
        <begin position="1"/>
        <end position="201"/>
    </location>
</feature>
<feature type="active site" evidence="1">
    <location>
        <position position="55"/>
    </location>
</feature>
<feature type="active site" evidence="1">
    <location>
        <position position="72"/>
    </location>
</feature>
<feature type="active site" evidence="1">
    <location>
        <position position="122"/>
    </location>
</feature>
<feature type="site" description="Cleavage; by autolysis" evidence="1">
    <location>
        <begin position="52"/>
        <end position="53"/>
    </location>
</feature>
<feature type="disulfide bond" description="Interchain (with C-10 in cleaved protease cofactor pVI-C)" evidence="1">
    <location>
        <position position="104"/>
    </location>
</feature>
<evidence type="ECO:0000255" key="1">
    <source>
        <dbReference type="HAMAP-Rule" id="MF_04059"/>
    </source>
</evidence>
<comment type="function">
    <text evidence="1">Cleaves viral precursor proteins (pTP, pIIIa, pVI, pVII, pVIII, and pX) inside newly assembled particles giving rise to mature virions. Protease complexed to its cofactor slides along the viral DNA to specifically locate and cleave the viral precursors. Mature virions have a weakened organization compared to the unmature virions, thereby facilitating subsequent uncoating. Without maturation, the particle lacks infectivity and is unable to uncoat. Late in adenovirus infection, in the cytoplasm, may participate in the cytoskeleton destruction. Cleaves host cell cytoskeletal keratins K7 and K18.</text>
</comment>
<comment type="catalytic activity">
    <reaction evidence="1">
        <text>Cleaves proteins of the adenovirus and its host cell at two consensus sites: -Yaa-Xaa-Gly-Gly-|-Xaa- and -Yaa-Xaa-Gly-Xaa-|-Gly- (in which Yaa is Met, Ile or Leu, and Xaa is any amino acid).</text>
        <dbReference type="EC" id="3.4.22.39"/>
    </reaction>
</comment>
<comment type="activity regulation">
    <text evidence="1">Requires DNA and protease cofactor for maximal activation. Inside nascent virions, becomes partially activated by binding to the viral DNA, allowing it to cleave the cofactor that binds to the protease and fully activates it. Actin, like the viral protease cofactor, seems to act as a cofactor in the cleavage of cytokeratin 18 and of actin itself.</text>
</comment>
<comment type="subunit">
    <text evidence="1">Interacts with protease cofactor pVI-C; this interaction is necessary for protease activation.</text>
</comment>
<comment type="subcellular location">
    <subcellularLocation>
        <location evidence="1">Virion</location>
    </subcellularLocation>
    <subcellularLocation>
        <location evidence="1">Host nucleus</location>
    </subcellularLocation>
    <text evidence="1">Present in about 10 copies per virion.</text>
</comment>
<comment type="induction">
    <text evidence="1">Expressed in the late phase of the viral replicative cycle.</text>
</comment>
<comment type="miscellaneous">
    <text evidence="1">All late proteins expressed from the major late promoter are produced by alternative splicing and alternative polyadenylation of the same gene giving rise to non-overlapping ORFs. A leader sequence is present in the N-terminus of all these mRNAs and is recognized by the viral shutoff protein to provide expression although conventional translation via ribosome scanning from the cap has been shut off in the host cell.</text>
</comment>
<comment type="similarity">
    <text evidence="1">Belongs to the peptidase C5 family.</text>
</comment>
<dbReference type="EC" id="3.4.22.39" evidence="1"/>
<dbReference type="EMBL" id="DQ106414">
    <property type="protein sequence ID" value="AAL92453.1"/>
    <property type="molecule type" value="Genomic_DNA"/>
</dbReference>
<dbReference type="RefSeq" id="YP_001552256.1">
    <property type="nucleotide sequence ID" value="NC_009989.1"/>
</dbReference>
<dbReference type="SMR" id="Q8JN66"/>
<dbReference type="MEROPS" id="C05.001"/>
<dbReference type="KEGG" id="vg:10973870"/>
<dbReference type="OrthoDB" id="9248at10239"/>
<dbReference type="Proteomes" id="UP000136605">
    <property type="component" value="Genome"/>
</dbReference>
<dbReference type="GO" id="GO:0042025">
    <property type="term" value="C:host cell nucleus"/>
    <property type="evidence" value="ECO:0007669"/>
    <property type="project" value="UniProtKB-SubCell"/>
</dbReference>
<dbReference type="GO" id="GO:0044423">
    <property type="term" value="C:virion component"/>
    <property type="evidence" value="ECO:0007669"/>
    <property type="project" value="UniProtKB-UniRule"/>
</dbReference>
<dbReference type="GO" id="GO:0004197">
    <property type="term" value="F:cysteine-type endopeptidase activity"/>
    <property type="evidence" value="ECO:0007669"/>
    <property type="project" value="UniProtKB-UniRule"/>
</dbReference>
<dbReference type="GO" id="GO:0003677">
    <property type="term" value="F:DNA binding"/>
    <property type="evidence" value="ECO:0007669"/>
    <property type="project" value="UniProtKB-UniRule"/>
</dbReference>
<dbReference type="GO" id="GO:0006508">
    <property type="term" value="P:proteolysis"/>
    <property type="evidence" value="ECO:0007669"/>
    <property type="project" value="UniProtKB-KW"/>
</dbReference>
<dbReference type="Gene3D" id="3.40.395.10">
    <property type="entry name" value="Adenoviral Proteinase, Chain A"/>
    <property type="match status" value="1"/>
</dbReference>
<dbReference type="HAMAP" id="MF_04059">
    <property type="entry name" value="ADV_PRO"/>
    <property type="match status" value="1"/>
</dbReference>
<dbReference type="InterPro" id="IPR038765">
    <property type="entry name" value="Papain-like_cys_pep_sf"/>
</dbReference>
<dbReference type="InterPro" id="IPR000855">
    <property type="entry name" value="Peptidase_C5"/>
</dbReference>
<dbReference type="Pfam" id="PF00770">
    <property type="entry name" value="Peptidase_C5"/>
    <property type="match status" value="1"/>
</dbReference>
<dbReference type="PIRSF" id="PIRSF001218">
    <property type="entry name" value="Protease_ADV"/>
    <property type="match status" value="1"/>
</dbReference>
<dbReference type="PRINTS" id="PR00703">
    <property type="entry name" value="ADVENDOPTASE"/>
</dbReference>
<dbReference type="SUPFAM" id="SSF54001">
    <property type="entry name" value="Cysteine proteinases"/>
    <property type="match status" value="1"/>
</dbReference>
<accession>Q8JN66</accession>